<protein>
    <recommendedName>
        <fullName>Soluble guanylate cyclase gcy-33</fullName>
        <ecNumber>4.6.1.2</ecNumber>
    </recommendedName>
</protein>
<gene>
    <name type="primary">gcy-33</name>
    <name type="ORF">F57F5.2</name>
</gene>
<name>GCY33_CAEEL</name>
<proteinExistence type="evidence at transcript level"/>
<feature type="chain" id="PRO_0000074124" description="Soluble guanylate cyclase gcy-33">
    <location>
        <begin position="1"/>
        <end position="945"/>
    </location>
</feature>
<feature type="domain" description="Guanylate cyclase" evidence="4">
    <location>
        <begin position="437"/>
        <end position="567"/>
    </location>
</feature>
<feature type="region of interest" description="Disordered" evidence="5">
    <location>
        <begin position="639"/>
        <end position="679"/>
    </location>
</feature>
<feature type="region of interest" description="Disordered" evidence="5">
    <location>
        <begin position="706"/>
        <end position="930"/>
    </location>
</feature>
<feature type="coiled-coil region" evidence="3">
    <location>
        <begin position="388"/>
        <end position="413"/>
    </location>
</feature>
<feature type="coiled-coil region" evidence="3">
    <location>
        <begin position="763"/>
        <end position="802"/>
    </location>
</feature>
<feature type="compositionally biased region" description="Low complexity" evidence="5">
    <location>
        <begin position="661"/>
        <end position="679"/>
    </location>
</feature>
<feature type="compositionally biased region" description="Polar residues" evidence="5">
    <location>
        <begin position="711"/>
        <end position="720"/>
    </location>
</feature>
<feature type="compositionally biased region" description="Basic and acidic residues" evidence="5">
    <location>
        <begin position="721"/>
        <end position="731"/>
    </location>
</feature>
<feature type="compositionally biased region" description="Polar residues" evidence="5">
    <location>
        <begin position="732"/>
        <end position="744"/>
    </location>
</feature>
<feature type="compositionally biased region" description="Basic and acidic residues" evidence="5">
    <location>
        <begin position="750"/>
        <end position="759"/>
    </location>
</feature>
<feature type="compositionally biased region" description="Basic and acidic residues" evidence="5">
    <location>
        <begin position="766"/>
        <end position="804"/>
    </location>
</feature>
<feature type="compositionally biased region" description="Polar residues" evidence="5">
    <location>
        <begin position="817"/>
        <end position="828"/>
    </location>
</feature>
<feature type="compositionally biased region" description="Basic and acidic residues" evidence="5">
    <location>
        <begin position="851"/>
        <end position="861"/>
    </location>
</feature>
<feature type="compositionally biased region" description="Polar residues" evidence="5">
    <location>
        <begin position="862"/>
        <end position="884"/>
    </location>
</feature>
<feature type="compositionally biased region" description="Basic and acidic residues" evidence="5">
    <location>
        <begin position="886"/>
        <end position="896"/>
    </location>
</feature>
<feature type="compositionally biased region" description="Low complexity" evidence="5">
    <location>
        <begin position="898"/>
        <end position="911"/>
    </location>
</feature>
<feature type="compositionally biased region" description="Basic and acidic residues" evidence="5">
    <location>
        <begin position="916"/>
        <end position="930"/>
    </location>
</feature>
<feature type="binding site" description="proximal binding residue" evidence="1">
    <location>
        <position position="104"/>
    </location>
    <ligand>
        <name>heme</name>
        <dbReference type="ChEBI" id="CHEBI:30413"/>
    </ligand>
    <ligandPart>
        <name>Fe</name>
        <dbReference type="ChEBI" id="CHEBI:18248"/>
    </ligandPart>
</feature>
<comment type="function">
    <text evidence="2 6">Synthesizes cyclic GMP (cGMP) from GTP (By similarity). May be involved in sensitivity to quinine by regulating egl-4 activity through the production of cGMP (PubMed:23874221).</text>
</comment>
<comment type="catalytic activity">
    <reaction>
        <text>GTP = 3',5'-cyclic GMP + diphosphate</text>
        <dbReference type="Rhea" id="RHEA:13665"/>
        <dbReference type="ChEBI" id="CHEBI:33019"/>
        <dbReference type="ChEBI" id="CHEBI:37565"/>
        <dbReference type="ChEBI" id="CHEBI:57746"/>
        <dbReference type="EC" id="4.6.1.2"/>
    </reaction>
</comment>
<comment type="cofactor">
    <cofactor evidence="1">
        <name>heme</name>
        <dbReference type="ChEBI" id="CHEBI:30413"/>
    </cofactor>
    <text evidence="1">Binds 1 or 2 heme groups per heterodimer.</text>
</comment>
<comment type="activity regulation">
    <text evidence="1">May be regulated by molecular oxygen. Probably not activated by nitric oxide (NO) (By similarity).</text>
</comment>
<comment type="subunit">
    <text evidence="1">Heterodimer; with other soluble guanylate cyclases.</text>
</comment>
<comment type="subcellular location">
    <subcellularLocation>
        <location evidence="1">Cytoplasm</location>
    </subcellularLocation>
</comment>
<comment type="tissue specificity">
    <text evidence="7">Expressed in BAG sensory neuron.</text>
</comment>
<comment type="miscellaneous">
    <text>There are two types of guanylate cyclases: soluble forms and membrane-associated receptor forms.</text>
</comment>
<comment type="similarity">
    <text evidence="4">Belongs to the adenylyl cyclase class-4/guanylyl cyclase family.</text>
</comment>
<keyword id="KW-0141">cGMP biosynthesis</keyword>
<keyword id="KW-0175">Coiled coil</keyword>
<keyword id="KW-0963">Cytoplasm</keyword>
<keyword id="KW-0342">GTP-binding</keyword>
<keyword id="KW-0349">Heme</keyword>
<keyword id="KW-0408">Iron</keyword>
<keyword id="KW-0456">Lyase</keyword>
<keyword id="KW-0479">Metal-binding</keyword>
<keyword id="KW-0547">Nucleotide-binding</keyword>
<keyword id="KW-1185">Reference proteome</keyword>
<dbReference type="EC" id="4.6.1.2"/>
<dbReference type="EMBL" id="AY275181">
    <property type="protein sequence ID" value="AAP32289.1"/>
    <property type="molecule type" value="mRNA"/>
</dbReference>
<dbReference type="EMBL" id="Z75953">
    <property type="protein sequence ID" value="CAB00103.2"/>
    <property type="molecule type" value="Genomic_DNA"/>
</dbReference>
<dbReference type="EMBL" id="Z78012">
    <property type="protein sequence ID" value="CAB00103.2"/>
    <property type="status" value="JOINED"/>
    <property type="molecule type" value="Genomic_DNA"/>
</dbReference>
<dbReference type="PIR" id="T20156">
    <property type="entry name" value="T20156"/>
</dbReference>
<dbReference type="RefSeq" id="NP_001256391.1">
    <property type="nucleotide sequence ID" value="NM_001269462.4"/>
</dbReference>
<dbReference type="SMR" id="P90895"/>
<dbReference type="FunCoup" id="P90895">
    <property type="interactions" value="64"/>
</dbReference>
<dbReference type="STRING" id="6239.F57F5.2c.1"/>
<dbReference type="PaxDb" id="6239-F57F5.2c"/>
<dbReference type="EnsemblMetazoa" id="F57F5.2a.1">
    <property type="protein sequence ID" value="F57F5.2a.1"/>
    <property type="gene ID" value="WBGene00001553"/>
</dbReference>
<dbReference type="GeneID" id="179644"/>
<dbReference type="KEGG" id="cel:CELE_F57F5.2"/>
<dbReference type="UCSC" id="F57F5.2">
    <property type="organism name" value="c. elegans"/>
</dbReference>
<dbReference type="AGR" id="WB:WBGene00001553"/>
<dbReference type="CTD" id="179644"/>
<dbReference type="WormBase" id="F57F5.2a">
    <property type="protein sequence ID" value="CE34891"/>
    <property type="gene ID" value="WBGene00001553"/>
    <property type="gene designation" value="gcy-33"/>
</dbReference>
<dbReference type="eggNOG" id="KOG4171">
    <property type="taxonomic scope" value="Eukaryota"/>
</dbReference>
<dbReference type="HOGENOM" id="CLU_011614_4_1_1"/>
<dbReference type="InParanoid" id="P90895"/>
<dbReference type="OrthoDB" id="6127067at2759"/>
<dbReference type="PhylomeDB" id="P90895"/>
<dbReference type="PRO" id="PR:P90895"/>
<dbReference type="Proteomes" id="UP000001940">
    <property type="component" value="Chromosome V"/>
</dbReference>
<dbReference type="Bgee" id="WBGene00001553">
    <property type="expression patterns" value="Expressed in pharyngeal muscle cell (C elegans) and 3 other cell types or tissues"/>
</dbReference>
<dbReference type="ExpressionAtlas" id="P90895">
    <property type="expression patterns" value="baseline and differential"/>
</dbReference>
<dbReference type="GO" id="GO:0008074">
    <property type="term" value="C:guanylate cyclase complex, soluble"/>
    <property type="evidence" value="ECO:0000318"/>
    <property type="project" value="GO_Central"/>
</dbReference>
<dbReference type="GO" id="GO:0070027">
    <property type="term" value="F:carbon monoxide sensor activity"/>
    <property type="evidence" value="ECO:0000314"/>
    <property type="project" value="WormBase"/>
</dbReference>
<dbReference type="GO" id="GO:0005525">
    <property type="term" value="F:GTP binding"/>
    <property type="evidence" value="ECO:0007669"/>
    <property type="project" value="UniProtKB-KW"/>
</dbReference>
<dbReference type="GO" id="GO:0004383">
    <property type="term" value="F:guanylate cyclase activity"/>
    <property type="evidence" value="ECO:0000318"/>
    <property type="project" value="GO_Central"/>
</dbReference>
<dbReference type="GO" id="GO:0020037">
    <property type="term" value="F:heme binding"/>
    <property type="evidence" value="ECO:0007669"/>
    <property type="project" value="InterPro"/>
</dbReference>
<dbReference type="GO" id="GO:0046872">
    <property type="term" value="F:metal ion binding"/>
    <property type="evidence" value="ECO:0007669"/>
    <property type="project" value="UniProtKB-KW"/>
</dbReference>
<dbReference type="GO" id="GO:0070026">
    <property type="term" value="F:nitric oxide binding"/>
    <property type="evidence" value="ECO:0000314"/>
    <property type="project" value="WormBase"/>
</dbReference>
<dbReference type="GO" id="GO:0019826">
    <property type="term" value="F:oxygen sensor activity"/>
    <property type="evidence" value="ECO:0000314"/>
    <property type="project" value="WormBase"/>
</dbReference>
<dbReference type="GO" id="GO:0007635">
    <property type="term" value="P:chemosensory behavior"/>
    <property type="evidence" value="ECO:0000315"/>
    <property type="project" value="UniProtKB"/>
</dbReference>
<dbReference type="GO" id="GO:0038060">
    <property type="term" value="P:nitric oxide-cGMP-mediated signaling"/>
    <property type="evidence" value="ECO:0000318"/>
    <property type="project" value="GO_Central"/>
</dbReference>
<dbReference type="GO" id="GO:0070482">
    <property type="term" value="P:response to oxygen levels"/>
    <property type="evidence" value="ECO:0000315"/>
    <property type="project" value="WormBase"/>
</dbReference>
<dbReference type="GO" id="GO:0050913">
    <property type="term" value="P:sensory perception of bitter taste"/>
    <property type="evidence" value="ECO:0000315"/>
    <property type="project" value="UniProtKB"/>
</dbReference>
<dbReference type="CDD" id="cd07302">
    <property type="entry name" value="CHD"/>
    <property type="match status" value="1"/>
</dbReference>
<dbReference type="FunFam" id="3.30.70.1230:FF:000038">
    <property type="entry name" value="soluble guanylate cyclase 89Da"/>
    <property type="match status" value="1"/>
</dbReference>
<dbReference type="FunFam" id="3.30.450.260:FF:000007">
    <property type="entry name" value="Soluble guanylate cyclase gcy-33"/>
    <property type="match status" value="1"/>
</dbReference>
<dbReference type="FunFam" id="3.90.1520.10:FF:000008">
    <property type="entry name" value="Soluble guanylate cyclase gcy-33"/>
    <property type="match status" value="1"/>
</dbReference>
<dbReference type="Gene3D" id="6.10.250.780">
    <property type="match status" value="1"/>
</dbReference>
<dbReference type="Gene3D" id="3.90.1520.10">
    <property type="entry name" value="H-NOX domain"/>
    <property type="match status" value="1"/>
</dbReference>
<dbReference type="Gene3D" id="3.30.450.260">
    <property type="entry name" value="Haem NO binding associated domain"/>
    <property type="match status" value="1"/>
</dbReference>
<dbReference type="Gene3D" id="3.30.70.1230">
    <property type="entry name" value="Nucleotide cyclase"/>
    <property type="match status" value="1"/>
</dbReference>
<dbReference type="InterPro" id="IPR001054">
    <property type="entry name" value="A/G_cyclase"/>
</dbReference>
<dbReference type="InterPro" id="IPR018297">
    <property type="entry name" value="A/G_cyclase_CS"/>
</dbReference>
<dbReference type="InterPro" id="IPR038158">
    <property type="entry name" value="H-NOX_domain_sf"/>
</dbReference>
<dbReference type="InterPro" id="IPR011644">
    <property type="entry name" value="Heme_NO-bd"/>
</dbReference>
<dbReference type="InterPro" id="IPR011645">
    <property type="entry name" value="HNOB_dom_associated"/>
</dbReference>
<dbReference type="InterPro" id="IPR042463">
    <property type="entry name" value="HNOB_dom_associated_sf"/>
</dbReference>
<dbReference type="InterPro" id="IPR024096">
    <property type="entry name" value="NO_sig/Golgi_transp_ligand-bd"/>
</dbReference>
<dbReference type="InterPro" id="IPR029787">
    <property type="entry name" value="Nucleotide_cyclase"/>
</dbReference>
<dbReference type="PANTHER" id="PTHR45655">
    <property type="entry name" value="GUANYLATE CYCLASE SOLUBLE SUBUNIT BETA-2"/>
    <property type="match status" value="1"/>
</dbReference>
<dbReference type="PANTHER" id="PTHR45655:SF8">
    <property type="entry name" value="SOLUBLE GUANYLATE CYCLASE GCY-33"/>
    <property type="match status" value="1"/>
</dbReference>
<dbReference type="Pfam" id="PF00211">
    <property type="entry name" value="Guanylate_cyc"/>
    <property type="match status" value="1"/>
</dbReference>
<dbReference type="Pfam" id="PF07700">
    <property type="entry name" value="HNOB"/>
    <property type="match status" value="1"/>
</dbReference>
<dbReference type="Pfam" id="PF07701">
    <property type="entry name" value="HNOBA"/>
    <property type="match status" value="1"/>
</dbReference>
<dbReference type="SMART" id="SM00044">
    <property type="entry name" value="CYCc"/>
    <property type="match status" value="1"/>
</dbReference>
<dbReference type="SUPFAM" id="SSF111126">
    <property type="entry name" value="Ligand-binding domain in the NO signalling and Golgi transport"/>
    <property type="match status" value="1"/>
</dbReference>
<dbReference type="SUPFAM" id="SSF55073">
    <property type="entry name" value="Nucleotide cyclase"/>
    <property type="match status" value="1"/>
</dbReference>
<dbReference type="PROSITE" id="PS00452">
    <property type="entry name" value="GUANYLATE_CYCLASE_1"/>
    <property type="match status" value="1"/>
</dbReference>
<dbReference type="PROSITE" id="PS50125">
    <property type="entry name" value="GUANYLATE_CYCLASE_2"/>
    <property type="match status" value="1"/>
</dbReference>
<organism>
    <name type="scientific">Caenorhabditis elegans</name>
    <dbReference type="NCBI Taxonomy" id="6239"/>
    <lineage>
        <taxon>Eukaryota</taxon>
        <taxon>Metazoa</taxon>
        <taxon>Ecdysozoa</taxon>
        <taxon>Nematoda</taxon>
        <taxon>Chromadorea</taxon>
        <taxon>Rhabditida</taxon>
        <taxon>Rhabditina</taxon>
        <taxon>Rhabditomorpha</taxon>
        <taxon>Rhabditoidea</taxon>
        <taxon>Rhabditidae</taxon>
        <taxon>Peloderinae</taxon>
        <taxon>Caenorhabditis</taxon>
    </lineage>
</organism>
<evidence type="ECO:0000250" key="1"/>
<evidence type="ECO:0000250" key="2">
    <source>
        <dbReference type="UniProtKB" id="Q19187"/>
    </source>
</evidence>
<evidence type="ECO:0000255" key="3"/>
<evidence type="ECO:0000255" key="4">
    <source>
        <dbReference type="PROSITE-ProRule" id="PRU00099"/>
    </source>
</evidence>
<evidence type="ECO:0000256" key="5">
    <source>
        <dbReference type="SAM" id="MobiDB-lite"/>
    </source>
</evidence>
<evidence type="ECO:0000269" key="6">
    <source>
    </source>
</evidence>
<evidence type="ECO:0000269" key="7">
    <source>
    </source>
</evidence>
<accession>P90895</accession>
<accession>Q18791</accession>
<accession>Q86C59</accession>
<reference key="1">
    <citation type="submission" date="2003-04" db="EMBL/GenBank/DDBJ databases">
        <title>Soluble guanylyl cyclases in Caenorhabditis elegans.</title>
        <authorList>
            <person name="Hudson M.L."/>
            <person name="Karow D.S."/>
            <person name="Chisholm A.D."/>
            <person name="Marletta M.A."/>
            <person name="Morton D.B."/>
        </authorList>
    </citation>
    <scope>NUCLEOTIDE SEQUENCE [MRNA]</scope>
</reference>
<reference key="2">
    <citation type="journal article" date="1998" name="Science">
        <title>Genome sequence of the nematode C. elegans: a platform for investigating biology.</title>
        <authorList>
            <consortium name="The C. elegans sequencing consortium"/>
        </authorList>
    </citation>
    <scope>NUCLEOTIDE SEQUENCE [LARGE SCALE GENOMIC DNA]</scope>
    <source>
        <strain>Bristol N2</strain>
    </source>
</reference>
<reference key="3">
    <citation type="journal article" date="1997" name="Proc. Natl. Acad. Sci. U.S.A.">
        <title>Guanylyl cyclase expression in specific sensory neurons: a new family of chemosensory receptors.</title>
        <authorList>
            <person name="Yu S."/>
            <person name="Avery L."/>
            <person name="Baude E."/>
            <person name="Garbers D.L."/>
        </authorList>
    </citation>
    <scope>TISSUE SPECIFICITY</scope>
</reference>
<reference key="4">
    <citation type="journal article" date="2013" name="PLoS Genet.">
        <title>The C. elegans cGMP-dependent protein kinase EGL-4 regulates nociceptive behavioral sensitivity.</title>
        <authorList>
            <person name="Krzyzanowski M.C."/>
            <person name="Brueggemann C."/>
            <person name="Ezak M.J."/>
            <person name="Wood J.F."/>
            <person name="Michaels K.L."/>
            <person name="Jackson C.A."/>
            <person name="Juang B.T."/>
            <person name="Collins K.D."/>
            <person name="Yu M.C."/>
            <person name="L'etoile N.D."/>
            <person name="Ferkey D.M."/>
        </authorList>
    </citation>
    <scope>FUNCTION</scope>
</reference>
<sequence length="945" mass="106829">MYGLVIEGVRFMIQENWGPQVLLQVQKLTSLSEKSVSTHDQYSEHVVPQMFKAIHEITGTPYEQIGVLAGRFFVQFLIRNGYGDLMNVMGRRFSDFIKGLDNIHEYFRFSYPKLRAPSFYCKSESEDGLILHYRSRRTGYLSYVIGQLVELARVFYQLDIGIQVLKKKEKGRFTFVVLKISFDNVGLGQDLKLKERVKNLNEYLPVDTKSFLQMFPFHIAFNKKLEILMAGQGLLNLMPNIQGLLMTDVFDLQRPCIKFTAEGIMVHQNCVFQIESLHPVVKQTEENITVQINDITEDKVSLEKKTVMDNEYESLPYVTLRGPITVLKSSETFLLLATCVVDTLDTMFKMGLYLNDFGESDCNREIIMATIQKSDTLKTMLENEKRRSEVLTEMTREISEAKKTARTLLTQMMPYEVAQTMMRSGSVDHCEAFECVSIGFIRVCDFSKISLFIEAFEVVNLLNTIYSHLDSIVDTHGVYKVETIGESYMISAGCPYRDDYDAEMVSDCCLEMVSHIKSFEYQSHDAVKKVLIKCGIFTGPVVGGVVGVRTPRYCLFGDTVNTASRMESSNQTPMTIQIGQRTKDRVEKQASGAFRIKPKGNVFVKGKGDMRVYEIEKKKGRARYKKSDPLRKKMVAEKKEAEELLDEDNEGHRSSALSRMSLGESIDSSSSRRGSLSGSQLELNKTIAQTIELTSKASAALDLNMQDENNRPPTWSASHSQDIRKPRKTESKITLNSRLSSSDLAVSRVETSKDSDGETPRPTSSELKEVNRIREEALAQEKEEERTTKEENQKIEEVGEDHVSEATSLLDSEVSHGDNNISFSQMPSDSIPHEDRTSLPSATPSEIGDAISKKKLEKEDSNSSMSSLDERTTVSAKPTTTRRLLNQKDLEKEKKRSSMAGSSVTSSSAHSHSIRSKKDTRDKSRCKCEDIRADNKLKTKVCSIM</sequence>